<reference key="1">
    <citation type="submission" date="2000-01" db="EMBL/GenBank/DDBJ databases">
        <title>A novel gene expressed in human liver cancer tissue.</title>
        <authorList>
            <person name="Li Y."/>
            <person name="Wu T."/>
            <person name="Xu S."/>
            <person name="Ren S."/>
            <person name="Chen Z."/>
            <person name="Han Z."/>
        </authorList>
    </citation>
    <scope>NUCLEOTIDE SEQUENCE [LARGE SCALE MRNA] (ISOFORM 1)</scope>
    <scope>VARIANT GLU-165</scope>
    <source>
        <tissue>Liver cancer</tissue>
    </source>
</reference>
<reference key="2">
    <citation type="journal article" date="2004" name="Nat. Genet.">
        <title>Complete sequencing and characterization of 21,243 full-length human cDNAs.</title>
        <authorList>
            <person name="Ota T."/>
            <person name="Suzuki Y."/>
            <person name="Nishikawa T."/>
            <person name="Otsuki T."/>
            <person name="Sugiyama T."/>
            <person name="Irie R."/>
            <person name="Wakamatsu A."/>
            <person name="Hayashi K."/>
            <person name="Sato H."/>
            <person name="Nagai K."/>
            <person name="Kimura K."/>
            <person name="Makita H."/>
            <person name="Sekine M."/>
            <person name="Obayashi M."/>
            <person name="Nishi T."/>
            <person name="Shibahara T."/>
            <person name="Tanaka T."/>
            <person name="Ishii S."/>
            <person name="Yamamoto J."/>
            <person name="Saito K."/>
            <person name="Kawai Y."/>
            <person name="Isono Y."/>
            <person name="Nakamura Y."/>
            <person name="Nagahari K."/>
            <person name="Murakami K."/>
            <person name="Yasuda T."/>
            <person name="Iwayanagi T."/>
            <person name="Wagatsuma M."/>
            <person name="Shiratori A."/>
            <person name="Sudo H."/>
            <person name="Hosoiri T."/>
            <person name="Kaku Y."/>
            <person name="Kodaira H."/>
            <person name="Kondo H."/>
            <person name="Sugawara M."/>
            <person name="Takahashi M."/>
            <person name="Kanda K."/>
            <person name="Yokoi T."/>
            <person name="Furuya T."/>
            <person name="Kikkawa E."/>
            <person name="Omura Y."/>
            <person name="Abe K."/>
            <person name="Kamihara K."/>
            <person name="Katsuta N."/>
            <person name="Sato K."/>
            <person name="Tanikawa M."/>
            <person name="Yamazaki M."/>
            <person name="Ninomiya K."/>
            <person name="Ishibashi T."/>
            <person name="Yamashita H."/>
            <person name="Murakawa K."/>
            <person name="Fujimori K."/>
            <person name="Tanai H."/>
            <person name="Kimata M."/>
            <person name="Watanabe M."/>
            <person name="Hiraoka S."/>
            <person name="Chiba Y."/>
            <person name="Ishida S."/>
            <person name="Ono Y."/>
            <person name="Takiguchi S."/>
            <person name="Watanabe S."/>
            <person name="Yosida M."/>
            <person name="Hotuta T."/>
            <person name="Kusano J."/>
            <person name="Kanehori K."/>
            <person name="Takahashi-Fujii A."/>
            <person name="Hara H."/>
            <person name="Tanase T.-O."/>
            <person name="Nomura Y."/>
            <person name="Togiya S."/>
            <person name="Komai F."/>
            <person name="Hara R."/>
            <person name="Takeuchi K."/>
            <person name="Arita M."/>
            <person name="Imose N."/>
            <person name="Musashino K."/>
            <person name="Yuuki H."/>
            <person name="Oshima A."/>
            <person name="Sasaki N."/>
            <person name="Aotsuka S."/>
            <person name="Yoshikawa Y."/>
            <person name="Matsunawa H."/>
            <person name="Ichihara T."/>
            <person name="Shiohata N."/>
            <person name="Sano S."/>
            <person name="Moriya S."/>
            <person name="Momiyama H."/>
            <person name="Satoh N."/>
            <person name="Takami S."/>
            <person name="Terashima Y."/>
            <person name="Suzuki O."/>
            <person name="Nakagawa S."/>
            <person name="Senoh A."/>
            <person name="Mizoguchi H."/>
            <person name="Goto Y."/>
            <person name="Shimizu F."/>
            <person name="Wakebe H."/>
            <person name="Hishigaki H."/>
            <person name="Watanabe T."/>
            <person name="Sugiyama A."/>
            <person name="Takemoto M."/>
            <person name="Kawakami B."/>
            <person name="Yamazaki M."/>
            <person name="Watanabe K."/>
            <person name="Kumagai A."/>
            <person name="Itakura S."/>
            <person name="Fukuzumi Y."/>
            <person name="Fujimori Y."/>
            <person name="Komiyama M."/>
            <person name="Tashiro H."/>
            <person name="Tanigami A."/>
            <person name="Fujiwara T."/>
            <person name="Ono T."/>
            <person name="Yamada K."/>
            <person name="Fujii Y."/>
            <person name="Ozaki K."/>
            <person name="Hirao M."/>
            <person name="Ohmori Y."/>
            <person name="Kawabata A."/>
            <person name="Hikiji T."/>
            <person name="Kobatake N."/>
            <person name="Inagaki H."/>
            <person name="Ikema Y."/>
            <person name="Okamoto S."/>
            <person name="Okitani R."/>
            <person name="Kawakami T."/>
            <person name="Noguchi S."/>
            <person name="Itoh T."/>
            <person name="Shigeta K."/>
            <person name="Senba T."/>
            <person name="Matsumura K."/>
            <person name="Nakajima Y."/>
            <person name="Mizuno T."/>
            <person name="Morinaga M."/>
            <person name="Sasaki M."/>
            <person name="Togashi T."/>
            <person name="Oyama M."/>
            <person name="Hata H."/>
            <person name="Watanabe M."/>
            <person name="Komatsu T."/>
            <person name="Mizushima-Sugano J."/>
            <person name="Satoh T."/>
            <person name="Shirai Y."/>
            <person name="Takahashi Y."/>
            <person name="Nakagawa K."/>
            <person name="Okumura K."/>
            <person name="Nagase T."/>
            <person name="Nomura N."/>
            <person name="Kikuchi H."/>
            <person name="Masuho Y."/>
            <person name="Yamashita R."/>
            <person name="Nakai K."/>
            <person name="Yada T."/>
            <person name="Nakamura Y."/>
            <person name="Ohara O."/>
            <person name="Isogai T."/>
            <person name="Sugano S."/>
        </authorList>
    </citation>
    <scope>NUCLEOTIDE SEQUENCE [LARGE SCALE MRNA] (ISOFORM 1)</scope>
    <scope>VARIANT GLU-165</scope>
    <source>
        <tissue>Testis</tissue>
    </source>
</reference>
<reference key="3">
    <citation type="journal article" date="2006" name="Nature">
        <title>The DNA sequence and biological annotation of human chromosome 1.</title>
        <authorList>
            <person name="Gregory S.G."/>
            <person name="Barlow K.F."/>
            <person name="McLay K.E."/>
            <person name="Kaul R."/>
            <person name="Swarbreck D."/>
            <person name="Dunham A."/>
            <person name="Scott C.E."/>
            <person name="Howe K.L."/>
            <person name="Woodfine K."/>
            <person name="Spencer C.C.A."/>
            <person name="Jones M.C."/>
            <person name="Gillson C."/>
            <person name="Searle S."/>
            <person name="Zhou Y."/>
            <person name="Kokocinski F."/>
            <person name="McDonald L."/>
            <person name="Evans R."/>
            <person name="Phillips K."/>
            <person name="Atkinson A."/>
            <person name="Cooper R."/>
            <person name="Jones C."/>
            <person name="Hall R.E."/>
            <person name="Andrews T.D."/>
            <person name="Lloyd C."/>
            <person name="Ainscough R."/>
            <person name="Almeida J.P."/>
            <person name="Ambrose K.D."/>
            <person name="Anderson F."/>
            <person name="Andrew R.W."/>
            <person name="Ashwell R.I.S."/>
            <person name="Aubin K."/>
            <person name="Babbage A.K."/>
            <person name="Bagguley C.L."/>
            <person name="Bailey J."/>
            <person name="Beasley H."/>
            <person name="Bethel G."/>
            <person name="Bird C.P."/>
            <person name="Bray-Allen S."/>
            <person name="Brown J.Y."/>
            <person name="Brown A.J."/>
            <person name="Buckley D."/>
            <person name="Burton J."/>
            <person name="Bye J."/>
            <person name="Carder C."/>
            <person name="Chapman J.C."/>
            <person name="Clark S.Y."/>
            <person name="Clarke G."/>
            <person name="Clee C."/>
            <person name="Cobley V."/>
            <person name="Collier R.E."/>
            <person name="Corby N."/>
            <person name="Coville G.J."/>
            <person name="Davies J."/>
            <person name="Deadman R."/>
            <person name="Dunn M."/>
            <person name="Earthrowl M."/>
            <person name="Ellington A.G."/>
            <person name="Errington H."/>
            <person name="Frankish A."/>
            <person name="Frankland J."/>
            <person name="French L."/>
            <person name="Garner P."/>
            <person name="Garnett J."/>
            <person name="Gay L."/>
            <person name="Ghori M.R.J."/>
            <person name="Gibson R."/>
            <person name="Gilby L.M."/>
            <person name="Gillett W."/>
            <person name="Glithero R.J."/>
            <person name="Grafham D.V."/>
            <person name="Griffiths C."/>
            <person name="Griffiths-Jones S."/>
            <person name="Grocock R."/>
            <person name="Hammond S."/>
            <person name="Harrison E.S.I."/>
            <person name="Hart E."/>
            <person name="Haugen E."/>
            <person name="Heath P.D."/>
            <person name="Holmes S."/>
            <person name="Holt K."/>
            <person name="Howden P.J."/>
            <person name="Hunt A.R."/>
            <person name="Hunt S.E."/>
            <person name="Hunter G."/>
            <person name="Isherwood J."/>
            <person name="James R."/>
            <person name="Johnson C."/>
            <person name="Johnson D."/>
            <person name="Joy A."/>
            <person name="Kay M."/>
            <person name="Kershaw J.K."/>
            <person name="Kibukawa M."/>
            <person name="Kimberley A.M."/>
            <person name="King A."/>
            <person name="Knights A.J."/>
            <person name="Lad H."/>
            <person name="Laird G."/>
            <person name="Lawlor S."/>
            <person name="Leongamornlert D.A."/>
            <person name="Lloyd D.M."/>
            <person name="Loveland J."/>
            <person name="Lovell J."/>
            <person name="Lush M.J."/>
            <person name="Lyne R."/>
            <person name="Martin S."/>
            <person name="Mashreghi-Mohammadi M."/>
            <person name="Matthews L."/>
            <person name="Matthews N.S.W."/>
            <person name="McLaren S."/>
            <person name="Milne S."/>
            <person name="Mistry S."/>
            <person name="Moore M.J.F."/>
            <person name="Nickerson T."/>
            <person name="O'Dell C.N."/>
            <person name="Oliver K."/>
            <person name="Palmeiri A."/>
            <person name="Palmer S.A."/>
            <person name="Parker A."/>
            <person name="Patel D."/>
            <person name="Pearce A.V."/>
            <person name="Peck A.I."/>
            <person name="Pelan S."/>
            <person name="Phelps K."/>
            <person name="Phillimore B.J."/>
            <person name="Plumb R."/>
            <person name="Rajan J."/>
            <person name="Raymond C."/>
            <person name="Rouse G."/>
            <person name="Saenphimmachak C."/>
            <person name="Sehra H.K."/>
            <person name="Sheridan E."/>
            <person name="Shownkeen R."/>
            <person name="Sims S."/>
            <person name="Skuce C.D."/>
            <person name="Smith M."/>
            <person name="Steward C."/>
            <person name="Subramanian S."/>
            <person name="Sycamore N."/>
            <person name="Tracey A."/>
            <person name="Tromans A."/>
            <person name="Van Helmond Z."/>
            <person name="Wall M."/>
            <person name="Wallis J.M."/>
            <person name="White S."/>
            <person name="Whitehead S.L."/>
            <person name="Wilkinson J.E."/>
            <person name="Willey D.L."/>
            <person name="Williams H."/>
            <person name="Wilming L."/>
            <person name="Wray P.W."/>
            <person name="Wu Z."/>
            <person name="Coulson A."/>
            <person name="Vaudin M."/>
            <person name="Sulston J.E."/>
            <person name="Durbin R.M."/>
            <person name="Hubbard T."/>
            <person name="Wooster R."/>
            <person name="Dunham I."/>
            <person name="Carter N.P."/>
            <person name="McVean G."/>
            <person name="Ross M.T."/>
            <person name="Harrow J."/>
            <person name="Olson M.V."/>
            <person name="Beck S."/>
            <person name="Rogers J."/>
            <person name="Bentley D.R."/>
        </authorList>
    </citation>
    <scope>NUCLEOTIDE SEQUENCE [LARGE SCALE GENOMIC DNA]</scope>
</reference>
<reference key="4">
    <citation type="journal article" date="2004" name="Genome Res.">
        <title>The status, quality, and expansion of the NIH full-length cDNA project: the Mammalian Gene Collection (MGC).</title>
        <authorList>
            <consortium name="The MGC Project Team"/>
        </authorList>
    </citation>
    <scope>NUCLEOTIDE SEQUENCE [LARGE SCALE MRNA] (ISOFORMS 1 AND 2)</scope>
    <scope>VARIANT GLU-165</scope>
    <source>
        <tissue>Colon</tissue>
    </source>
</reference>
<reference key="5">
    <citation type="journal article" date="2006" name="Nature">
        <title>Repression of p53 activity by Smyd2-mediated methylation.</title>
        <authorList>
            <person name="Huang J."/>
            <person name="Perez-Burgos L."/>
            <person name="Placek B.J."/>
            <person name="Sengupta R."/>
            <person name="Richter M."/>
            <person name="Dorsey J.A."/>
            <person name="Kubicek S."/>
            <person name="Opravil S."/>
            <person name="Jenuwein T."/>
            <person name="Berger S.L."/>
        </authorList>
    </citation>
    <scope>FUNCTION</scope>
    <scope>INTERACTION WITH TP53</scope>
    <scope>MUTAGENESIS OF HIS-207</scope>
</reference>
<reference key="6">
    <citation type="journal article" date="2007" name="Cell Res.">
        <title>C/EBPalphap30 plays transcriptional regulatory roles distinct from C/EBPalphap42.</title>
        <authorList>
            <person name="Wang C."/>
            <person name="Chen X."/>
            <person name="Wang Y."/>
            <person name="Gong J."/>
            <person name="Hu G."/>
        </authorList>
    </citation>
    <scope>INDUCTION</scope>
</reference>
<reference key="7">
    <citation type="journal article" date="2007" name="Nature">
        <title>p53 is regulated by the lysine demethylase LSD1.</title>
        <authorList>
            <person name="Huang J."/>
            <person name="Sengupta R."/>
            <person name="Espejo A.B."/>
            <person name="Lee M.G."/>
            <person name="Dorsey J.A."/>
            <person name="Richter M."/>
            <person name="Opravil S."/>
            <person name="Shiekhattar R."/>
            <person name="Bedford M.T."/>
            <person name="Jenuwein T."/>
            <person name="Berger S.L."/>
        </authorList>
    </citation>
    <scope>FUNCTION</scope>
</reference>
<reference key="8">
    <citation type="journal article" date="2008" name="Mol. Cell. Proteomics">
        <title>The tale of two domains: proteomics and genomics analysis of SMYD2, a new histone methyltransferase.</title>
        <authorList>
            <person name="Abu-Farha M."/>
            <person name="Lambert J.P."/>
            <person name="Al-Madhoun A.S."/>
            <person name="Elisma F."/>
            <person name="Skerjanc I.S."/>
            <person name="Figeys D."/>
        </authorList>
    </citation>
    <scope>FUNCTION</scope>
    <scope>CATALYTIC ACTIVITY</scope>
    <scope>INTERACTION WITH EPB41L3; HSP90AA1 AND TP53</scope>
</reference>
<reference key="9">
    <citation type="journal article" date="2010" name="J. Biol. Chem.">
        <title>Methylation of the retinoblastoma tumor suppressor by SMYD2.</title>
        <authorList>
            <person name="Saddic L.A."/>
            <person name="West L.E."/>
            <person name="Aslanian A."/>
            <person name="Yates J.R. III"/>
            <person name="Rubin S.M."/>
            <person name="Gozani O."/>
            <person name="Sage J."/>
        </authorList>
    </citation>
    <scope>FUNCTION</scope>
    <scope>INTERACTION WITH RB</scope>
    <scope>MUTAGENESIS OF TYR-240</scope>
</reference>
<reference key="10">
    <citation type="journal article" date="2013" name="J. Proteome Res.">
        <title>Toward a comprehensive characterization of a human cancer cell phosphoproteome.</title>
        <authorList>
            <person name="Zhou H."/>
            <person name="Di Palma S."/>
            <person name="Preisinger C."/>
            <person name="Peng M."/>
            <person name="Polat A.N."/>
            <person name="Heck A.J."/>
            <person name="Mohammed S."/>
        </authorList>
    </citation>
    <scope>PHOSPHORYLATION [LARGE SCALE ANALYSIS] AT SER-283</scope>
    <scope>IDENTIFICATION BY MASS SPECTROMETRY [LARGE SCALE ANALYSIS]</scope>
    <source>
        <tissue>Cervix carcinoma</tissue>
    </source>
</reference>
<reference key="11">
    <citation type="journal article" date="2011" name="J. Mol. Cell Biol.">
        <title>Structure of human lysine methyltransferase Smyd2 reveals insights into the substrate divergence in Smyd proteins.</title>
        <authorList>
            <person name="Xu S."/>
            <person name="Zhong C."/>
            <person name="Zhang T."/>
            <person name="Ding J."/>
        </authorList>
    </citation>
    <scope>X-RAY CRYSTALLOGRAPHY (2.79 ANGSTROMS) IN COMPLEX WITH S-ADENOSYL-L-METHIONINE AND ZINC IONS</scope>
</reference>
<reference key="12">
    <citation type="journal article" date="2011" name="J. Biol. Chem.">
        <title>Structure of human SMYD2 protein reveals the basis of p53 tumor suppressor methylation.</title>
        <authorList>
            <person name="Wang L."/>
            <person name="Li L."/>
            <person name="Zhang H."/>
            <person name="Luo X."/>
            <person name="Dai J."/>
            <person name="Zhou S."/>
            <person name="Gu J."/>
            <person name="Zhu J."/>
            <person name="Atadja P."/>
            <person name="Lu C."/>
            <person name="Li E."/>
            <person name="Zhao K."/>
        </authorList>
    </citation>
    <scope>X-RAY CRYSTALLOGRAPHY (2.10 ANGSTROMS) IN COMPLEXES WITH TP53/P53 PEPTIDE; S-ADENOSYL-L-METHIONINE AND ZINC IONS</scope>
    <scope>FUNCTION IN P53/TP53 METHYLATION</scope>
    <scope>CATALYTIC ACTIVITY</scope>
    <scope>MUTAGENESIS OF GLU-187; GLU-189; GLU-190; TYR-245; ASP-252; ARG-253; ARG-306; TYR-374; GLU-429 AND GLU-431</scope>
</reference>
<reference key="13">
    <citation type="journal article" date="2011" name="Structure">
        <title>Structural basis of substrate methylation and inhibition of SMYD2.</title>
        <authorList>
            <person name="Ferguson A.D."/>
            <person name="Larsen N.A."/>
            <person name="Howard T."/>
            <person name="Pollard H."/>
            <person name="Green I."/>
            <person name="Grande C."/>
            <person name="Cheung T."/>
            <person name="Garcia-Arenas R."/>
            <person name="Cowen S."/>
            <person name="Wu J."/>
            <person name="Godin R."/>
            <person name="Chen H."/>
            <person name="Keen N."/>
        </authorList>
    </citation>
    <scope>X-RAY CRYSTALLOGRAPHY (2.30 ANGSTROMS) IN COMPLEXES WITH P53/TP53 PEPTIDE; S-ADENOSYL-L-METHIONINE; SYNTHETIC INHIBITOR AND ZINC IONS</scope>
    <scope>FUNCTION</scope>
    <scope>CATALYTIC ACTIVITY</scope>
    <scope>MUTAGENESIS OF TYR-240</scope>
</reference>
<keyword id="KW-0002">3D-structure</keyword>
<keyword id="KW-0025">Alternative splicing</keyword>
<keyword id="KW-0156">Chromatin regulator</keyword>
<keyword id="KW-0963">Cytoplasm</keyword>
<keyword id="KW-0479">Metal-binding</keyword>
<keyword id="KW-0489">Methyltransferase</keyword>
<keyword id="KW-0539">Nucleus</keyword>
<keyword id="KW-0597">Phosphoprotein</keyword>
<keyword id="KW-1267">Proteomics identification</keyword>
<keyword id="KW-1185">Reference proteome</keyword>
<keyword id="KW-0949">S-adenosyl-L-methionine</keyword>
<keyword id="KW-0804">Transcription</keyword>
<keyword id="KW-0805">Transcription regulation</keyword>
<keyword id="KW-0808">Transferase</keyword>
<keyword id="KW-0862">Zinc</keyword>
<keyword id="KW-0863">Zinc-finger</keyword>
<proteinExistence type="evidence at protein level"/>
<evidence type="ECO:0000250" key="1"/>
<evidence type="ECO:0000255" key="2">
    <source>
        <dbReference type="PROSITE-ProRule" id="PRU00134"/>
    </source>
</evidence>
<evidence type="ECO:0000255" key="3">
    <source>
        <dbReference type="PROSITE-ProRule" id="PRU00190"/>
    </source>
</evidence>
<evidence type="ECO:0000269" key="4">
    <source>
    </source>
</evidence>
<evidence type="ECO:0000269" key="5">
    <source>
    </source>
</evidence>
<evidence type="ECO:0000269" key="6">
    <source>
    </source>
</evidence>
<evidence type="ECO:0000269" key="7">
    <source>
    </source>
</evidence>
<evidence type="ECO:0000269" key="8">
    <source>
    </source>
</evidence>
<evidence type="ECO:0000269" key="9">
    <source>
    </source>
</evidence>
<evidence type="ECO:0000269" key="10">
    <source>
    </source>
</evidence>
<evidence type="ECO:0000269" key="11">
    <source>
    </source>
</evidence>
<evidence type="ECO:0000269" key="12">
    <source>
    </source>
</evidence>
<evidence type="ECO:0000269" key="13">
    <source>
    </source>
</evidence>
<evidence type="ECO:0000269" key="14">
    <source ref="1"/>
</evidence>
<evidence type="ECO:0000303" key="15">
    <source>
    </source>
</evidence>
<evidence type="ECO:0007744" key="16">
    <source>
    </source>
</evidence>
<evidence type="ECO:0007829" key="17">
    <source>
        <dbReference type="PDB" id="4WUY"/>
    </source>
</evidence>
<evidence type="ECO:0007829" key="18">
    <source>
        <dbReference type="PDB" id="5ARF"/>
    </source>
</evidence>
<evidence type="ECO:0007829" key="19">
    <source>
        <dbReference type="PDB" id="5KJL"/>
    </source>
</evidence>
<evidence type="ECO:0007829" key="20">
    <source>
        <dbReference type="PDB" id="5V3H"/>
    </source>
</evidence>
<evidence type="ECO:0007829" key="21">
    <source>
        <dbReference type="PDB" id="6CBX"/>
    </source>
</evidence>
<evidence type="ECO:0007829" key="22">
    <source>
        <dbReference type="PDB" id="6CBY"/>
    </source>
</evidence>
<evidence type="ECO:0007829" key="23">
    <source>
        <dbReference type="PDB" id="6N3G"/>
    </source>
</evidence>
<protein>
    <recommendedName>
        <fullName>N-lysine methyltransferase SMYD2</fullName>
        <ecNumber evidence="9 12 13">2.1.1.-</ecNumber>
    </recommendedName>
    <alternativeName>
        <fullName>HSKM-B</fullName>
    </alternativeName>
    <alternativeName>
        <fullName>Histone methyltransferase SMYD2</fullName>
        <ecNumber evidence="9 12 13">2.1.1.354</ecNumber>
    </alternativeName>
    <alternativeName>
        <fullName>Lysine N-methyltransferase 3C</fullName>
    </alternativeName>
    <alternativeName>
        <fullName>SET and MYND domain-containing protein 2</fullName>
    </alternativeName>
</protein>
<sequence>MRAEGLGGLERFCSPGKGRGLRALQPFQVGDLLFSCPAYAYVLTVNERGNHCEYCFTRKEGLSKCGRCKQAFYCNVECQKEDWPMHKLECSPMVVFGENWNPSETVRLTARILAKQKIHPERTPSEKLLAVKEFESHLDKLDNEKKDLIQSDIAALHHFYSKHLGFPDNDSLVVLFAQVNCNGFTIEDEELSHLGSAIFPDVALMNHSCCPNVIVTYKGTLAEVRAVQEIKPGEEVFTSYIDLLYPTEDRNDRLRDSYFFTCECQECTTKDKDKAKVEIRKLSDPPKAEAIRDMVRYARNVIEEFRRAKHYKSPSELLEICELSQEKMSSVFEDSNVYMLHMMYQAMGVCLYMQDWEGALQYGQKIIKPYSKHYPLYSLNVASMWLKLGRLYMGLEHKAAGEKALKKAIAIMEVAHGKDHPYISEIKQEIESH</sequence>
<dbReference type="EC" id="2.1.1.-" evidence="9 12 13"/>
<dbReference type="EC" id="2.1.1.354" evidence="9 12 13"/>
<dbReference type="EMBL" id="AF226053">
    <property type="protein sequence ID" value="AAF86953.1"/>
    <property type="molecule type" value="mRNA"/>
</dbReference>
<dbReference type="EMBL" id="AK313868">
    <property type="protein sequence ID" value="BAG36596.1"/>
    <property type="molecule type" value="mRNA"/>
</dbReference>
<dbReference type="EMBL" id="AL929236">
    <property type="status" value="NOT_ANNOTATED_CDS"/>
    <property type="molecule type" value="Genomic_DNA"/>
</dbReference>
<dbReference type="EMBL" id="BC017080">
    <property type="protein sequence ID" value="AAH17080.2"/>
    <property type="molecule type" value="mRNA"/>
</dbReference>
<dbReference type="EMBL" id="BC098276">
    <property type="protein sequence ID" value="AAH98276.1"/>
    <property type="molecule type" value="mRNA"/>
</dbReference>
<dbReference type="EMBL" id="BC098133">
    <property type="protein sequence ID" value="AAH98133.1"/>
    <property type="molecule type" value="mRNA"/>
</dbReference>
<dbReference type="EMBL" id="BC098305">
    <property type="protein sequence ID" value="AAH98305.1"/>
    <property type="molecule type" value="mRNA"/>
</dbReference>
<dbReference type="EMBL" id="BC098335">
    <property type="protein sequence ID" value="AAH98335.1"/>
    <property type="molecule type" value="mRNA"/>
</dbReference>
<dbReference type="CCDS" id="CCDS31022.1">
    <molecule id="Q9NRG4-1"/>
</dbReference>
<dbReference type="RefSeq" id="NP_064582.2">
    <molecule id="Q9NRG4-1"/>
    <property type="nucleotide sequence ID" value="NM_020197.3"/>
</dbReference>
<dbReference type="RefSeq" id="XP_047281658.1">
    <molecule id="Q9NRG4-2"/>
    <property type="nucleotide sequence ID" value="XM_047425702.1"/>
</dbReference>
<dbReference type="PDB" id="3RIB">
    <property type="method" value="X-ray"/>
    <property type="resolution" value="2.79 A"/>
    <property type="chains" value="A/B=1-433"/>
</dbReference>
<dbReference type="PDB" id="3S7B">
    <property type="method" value="X-ray"/>
    <property type="resolution" value="2.42 A"/>
    <property type="chains" value="A=1-433"/>
</dbReference>
<dbReference type="PDB" id="3S7D">
    <property type="method" value="X-ray"/>
    <property type="resolution" value="2.30 A"/>
    <property type="chains" value="A=1-433"/>
</dbReference>
<dbReference type="PDB" id="3S7F">
    <property type="method" value="X-ray"/>
    <property type="resolution" value="2.85 A"/>
    <property type="chains" value="A=1-433"/>
</dbReference>
<dbReference type="PDB" id="3S7J">
    <property type="method" value="X-ray"/>
    <property type="resolution" value="3.04 A"/>
    <property type="chains" value="A=1-433"/>
</dbReference>
<dbReference type="PDB" id="3TG4">
    <property type="method" value="X-ray"/>
    <property type="resolution" value="2.00 A"/>
    <property type="chains" value="A=1-433"/>
</dbReference>
<dbReference type="PDB" id="3TG5">
    <property type="method" value="X-ray"/>
    <property type="resolution" value="2.30 A"/>
    <property type="chains" value="A=1-433"/>
</dbReference>
<dbReference type="PDB" id="4O6F">
    <property type="method" value="X-ray"/>
    <property type="resolution" value="2.82 A"/>
    <property type="chains" value="A=1-433"/>
</dbReference>
<dbReference type="PDB" id="4WUY">
    <property type="method" value="X-ray"/>
    <property type="resolution" value="1.63 A"/>
    <property type="chains" value="A=1-433"/>
</dbReference>
<dbReference type="PDB" id="4YND">
    <property type="method" value="X-ray"/>
    <property type="resolution" value="2.79 A"/>
    <property type="chains" value="A=1-433"/>
</dbReference>
<dbReference type="PDB" id="5ARF">
    <property type="method" value="X-ray"/>
    <property type="resolution" value="1.92 A"/>
    <property type="chains" value="A=2-433"/>
</dbReference>
<dbReference type="PDB" id="5ARG">
    <property type="method" value="X-ray"/>
    <property type="resolution" value="1.99 A"/>
    <property type="chains" value="A=2-433"/>
</dbReference>
<dbReference type="PDB" id="5KJK">
    <property type="method" value="X-ray"/>
    <property type="resolution" value="1.93 A"/>
    <property type="chains" value="A=5-433"/>
</dbReference>
<dbReference type="PDB" id="5KJL">
    <property type="method" value="X-ray"/>
    <property type="resolution" value="2.70 A"/>
    <property type="chains" value="A=5-433"/>
</dbReference>
<dbReference type="PDB" id="5KJM">
    <property type="method" value="X-ray"/>
    <property type="resolution" value="2.19 A"/>
    <property type="chains" value="A=5-433"/>
</dbReference>
<dbReference type="PDB" id="5KJN">
    <property type="method" value="X-ray"/>
    <property type="resolution" value="2.72 A"/>
    <property type="chains" value="A=5-433"/>
</dbReference>
<dbReference type="PDB" id="5V3H">
    <property type="method" value="X-ray"/>
    <property type="resolution" value="2.69 A"/>
    <property type="chains" value="A=1-433"/>
</dbReference>
<dbReference type="PDB" id="5WCG">
    <property type="method" value="X-ray"/>
    <property type="resolution" value="2.02 A"/>
    <property type="chains" value="A=1-433"/>
</dbReference>
<dbReference type="PDB" id="6CBX">
    <property type="method" value="X-ray"/>
    <property type="resolution" value="1.94 A"/>
    <property type="chains" value="A/B=1-433"/>
</dbReference>
<dbReference type="PDB" id="6CBY">
    <property type="method" value="X-ray"/>
    <property type="resolution" value="2.55 A"/>
    <property type="chains" value="A/B=1-433"/>
</dbReference>
<dbReference type="PDB" id="6MON">
    <property type="method" value="X-ray"/>
    <property type="resolution" value="2.71 A"/>
    <property type="chains" value="A/B=5-433"/>
</dbReference>
<dbReference type="PDB" id="6N3G">
    <property type="method" value="X-ray"/>
    <property type="resolution" value="2.43 A"/>
    <property type="chains" value="A=1-433"/>
</dbReference>
<dbReference type="PDB" id="9CKC">
    <property type="method" value="X-ray"/>
    <property type="resolution" value="2.10 A"/>
    <property type="chains" value="A/B=1-433"/>
</dbReference>
<dbReference type="PDB" id="9CKF">
    <property type="method" value="X-ray"/>
    <property type="resolution" value="2.50 A"/>
    <property type="chains" value="A/B=1-433"/>
</dbReference>
<dbReference type="PDB" id="9CKG">
    <property type="method" value="X-ray"/>
    <property type="resolution" value="2.75 A"/>
    <property type="chains" value="A=1-433"/>
</dbReference>
<dbReference type="PDBsum" id="3RIB"/>
<dbReference type="PDBsum" id="3S7B"/>
<dbReference type="PDBsum" id="3S7D"/>
<dbReference type="PDBsum" id="3S7F"/>
<dbReference type="PDBsum" id="3S7J"/>
<dbReference type="PDBsum" id="3TG4"/>
<dbReference type="PDBsum" id="3TG5"/>
<dbReference type="PDBsum" id="4O6F"/>
<dbReference type="PDBsum" id="4WUY"/>
<dbReference type="PDBsum" id="4YND"/>
<dbReference type="PDBsum" id="5ARF"/>
<dbReference type="PDBsum" id="5ARG"/>
<dbReference type="PDBsum" id="5KJK"/>
<dbReference type="PDBsum" id="5KJL"/>
<dbReference type="PDBsum" id="5KJM"/>
<dbReference type="PDBsum" id="5KJN"/>
<dbReference type="PDBsum" id="5V3H"/>
<dbReference type="PDBsum" id="5WCG"/>
<dbReference type="PDBsum" id="6CBX"/>
<dbReference type="PDBsum" id="6CBY"/>
<dbReference type="PDBsum" id="6MON"/>
<dbReference type="PDBsum" id="6N3G"/>
<dbReference type="PDBsum" id="9CKC"/>
<dbReference type="PDBsum" id="9CKF"/>
<dbReference type="PDBsum" id="9CKG"/>
<dbReference type="SMR" id="Q9NRG4"/>
<dbReference type="BioGRID" id="121274">
    <property type="interactions" value="65"/>
</dbReference>
<dbReference type="DIP" id="DIP-50202N"/>
<dbReference type="FunCoup" id="Q9NRG4">
    <property type="interactions" value="1977"/>
</dbReference>
<dbReference type="IntAct" id="Q9NRG4">
    <property type="interactions" value="46"/>
</dbReference>
<dbReference type="MINT" id="Q9NRG4"/>
<dbReference type="STRING" id="9606.ENSP00000355924"/>
<dbReference type="BindingDB" id="Q9NRG4"/>
<dbReference type="ChEMBL" id="CHEMBL2169716"/>
<dbReference type="GuidetoPHARMACOLOGY" id="2714"/>
<dbReference type="GlyGen" id="Q9NRG4">
    <property type="glycosylation" value="1 site, 1 O-linked glycan (1 site)"/>
</dbReference>
<dbReference type="iPTMnet" id="Q9NRG4"/>
<dbReference type="PhosphoSitePlus" id="Q9NRG4"/>
<dbReference type="BioMuta" id="SMYD2"/>
<dbReference type="DMDM" id="90185234"/>
<dbReference type="jPOST" id="Q9NRG4"/>
<dbReference type="MassIVE" id="Q9NRG4"/>
<dbReference type="PaxDb" id="9606-ENSP00000355924"/>
<dbReference type="PeptideAtlas" id="Q9NRG4"/>
<dbReference type="ProteomicsDB" id="82355">
    <molecule id="Q9NRG4-1"/>
</dbReference>
<dbReference type="Pumba" id="Q9NRG4"/>
<dbReference type="ABCD" id="Q9NRG4">
    <property type="antibodies" value="3 sequenced antibodies"/>
</dbReference>
<dbReference type="Antibodypedia" id="34617">
    <property type="antibodies" value="338 antibodies from 37 providers"/>
</dbReference>
<dbReference type="DNASU" id="56950"/>
<dbReference type="Ensembl" id="ENST00000366957.10">
    <molecule id="Q9NRG4-1"/>
    <property type="protein sequence ID" value="ENSP00000355924.5"/>
    <property type="gene ID" value="ENSG00000143499.14"/>
</dbReference>
<dbReference type="GeneID" id="56950"/>
<dbReference type="KEGG" id="hsa:56950"/>
<dbReference type="MANE-Select" id="ENST00000366957.10">
    <property type="protein sequence ID" value="ENSP00000355924.5"/>
    <property type="RefSeq nucleotide sequence ID" value="NM_020197.3"/>
    <property type="RefSeq protein sequence ID" value="NP_064582.2"/>
</dbReference>
<dbReference type="UCSC" id="uc057pjy.1">
    <molecule id="Q9NRG4-1"/>
    <property type="organism name" value="human"/>
</dbReference>
<dbReference type="AGR" id="HGNC:20982"/>
<dbReference type="CTD" id="56950"/>
<dbReference type="DisGeNET" id="56950"/>
<dbReference type="GeneCards" id="SMYD2"/>
<dbReference type="HGNC" id="HGNC:20982">
    <property type="gene designation" value="SMYD2"/>
</dbReference>
<dbReference type="HPA" id="ENSG00000143499">
    <property type="expression patterns" value="Tissue enhanced (heart)"/>
</dbReference>
<dbReference type="MIM" id="610663">
    <property type="type" value="gene"/>
</dbReference>
<dbReference type="neXtProt" id="NX_Q9NRG4"/>
<dbReference type="OpenTargets" id="ENSG00000143499"/>
<dbReference type="PharmGKB" id="PA134930268"/>
<dbReference type="VEuPathDB" id="HostDB:ENSG00000143499"/>
<dbReference type="eggNOG" id="KOG2084">
    <property type="taxonomic scope" value="Eukaryota"/>
</dbReference>
<dbReference type="GeneTree" id="ENSGT00940000157082"/>
<dbReference type="HOGENOM" id="CLU_018406_0_0_1"/>
<dbReference type="InParanoid" id="Q9NRG4"/>
<dbReference type="OMA" id="HYKSPGE"/>
<dbReference type="OrthoDB" id="5945798at2759"/>
<dbReference type="PAN-GO" id="Q9NRG4">
    <property type="GO annotations" value="3 GO annotations based on evolutionary models"/>
</dbReference>
<dbReference type="PhylomeDB" id="Q9NRG4"/>
<dbReference type="TreeFam" id="TF106487"/>
<dbReference type="BioCyc" id="MetaCyc:ENSG00000143499-MONOMER"/>
<dbReference type="PathwayCommons" id="Q9NRG4"/>
<dbReference type="Reactome" id="R-HSA-3214841">
    <property type="pathway name" value="PKMTs methylate histone lysines"/>
</dbReference>
<dbReference type="Reactome" id="R-HSA-6804760">
    <property type="pathway name" value="Regulation of TP53 Activity through Methylation"/>
</dbReference>
<dbReference type="SignaLink" id="Q9NRG4"/>
<dbReference type="SIGNOR" id="Q9NRG4"/>
<dbReference type="BioGRID-ORCS" id="56950">
    <property type="hits" value="8 hits in 1158 CRISPR screens"/>
</dbReference>
<dbReference type="ChiTaRS" id="SMYD2">
    <property type="organism name" value="human"/>
</dbReference>
<dbReference type="EvolutionaryTrace" id="Q9NRG4"/>
<dbReference type="GenomeRNAi" id="56950"/>
<dbReference type="Pharos" id="Q9NRG4">
    <property type="development level" value="Tchem"/>
</dbReference>
<dbReference type="PRO" id="PR:Q9NRG4"/>
<dbReference type="Proteomes" id="UP000005640">
    <property type="component" value="Chromosome 1"/>
</dbReference>
<dbReference type="RNAct" id="Q9NRG4">
    <property type="molecule type" value="protein"/>
</dbReference>
<dbReference type="Bgee" id="ENSG00000143499">
    <property type="expression patterns" value="Expressed in left ventricle myocardium and 213 other cell types or tissues"/>
</dbReference>
<dbReference type="ExpressionAtlas" id="Q9NRG4">
    <property type="expression patterns" value="baseline and differential"/>
</dbReference>
<dbReference type="GO" id="GO:0005737">
    <property type="term" value="C:cytoplasm"/>
    <property type="evidence" value="ECO:0000314"/>
    <property type="project" value="UniProtKB"/>
</dbReference>
<dbReference type="GO" id="GO:0005829">
    <property type="term" value="C:cytosol"/>
    <property type="evidence" value="ECO:0000250"/>
    <property type="project" value="UniProtKB"/>
</dbReference>
<dbReference type="GO" id="GO:0005654">
    <property type="term" value="C:nucleoplasm"/>
    <property type="evidence" value="ECO:0000304"/>
    <property type="project" value="Reactome"/>
</dbReference>
<dbReference type="GO" id="GO:0005634">
    <property type="term" value="C:nucleus"/>
    <property type="evidence" value="ECO:0000250"/>
    <property type="project" value="UniProtKB"/>
</dbReference>
<dbReference type="GO" id="GO:0140938">
    <property type="term" value="F:histone H3 methyltransferase activity"/>
    <property type="evidence" value="ECO:0000304"/>
    <property type="project" value="Reactome"/>
</dbReference>
<dbReference type="GO" id="GO:0046975">
    <property type="term" value="F:histone H3K36 methyltransferase activity"/>
    <property type="evidence" value="ECO:0000250"/>
    <property type="project" value="UniProtKB"/>
</dbReference>
<dbReference type="GO" id="GO:0140999">
    <property type="term" value="F:histone H3K4 trimethyltransferase activity"/>
    <property type="evidence" value="ECO:0007669"/>
    <property type="project" value="UniProtKB-EC"/>
</dbReference>
<dbReference type="GO" id="GO:0016278">
    <property type="term" value="F:lysine N-methyltransferase activity"/>
    <property type="evidence" value="ECO:0000304"/>
    <property type="project" value="Reactome"/>
</dbReference>
<dbReference type="GO" id="GO:0002039">
    <property type="term" value="F:p53 binding"/>
    <property type="evidence" value="ECO:0000353"/>
    <property type="project" value="UniProtKB"/>
</dbReference>
<dbReference type="GO" id="GO:0016279">
    <property type="term" value="F:protein-lysine N-methyltransferase activity"/>
    <property type="evidence" value="ECO:0000314"/>
    <property type="project" value="UniProtKB"/>
</dbReference>
<dbReference type="GO" id="GO:0000993">
    <property type="term" value="F:RNA polymerase II complex binding"/>
    <property type="evidence" value="ECO:0000250"/>
    <property type="project" value="UniProtKB"/>
</dbReference>
<dbReference type="GO" id="GO:0008270">
    <property type="term" value="F:zinc ion binding"/>
    <property type="evidence" value="ECO:0007669"/>
    <property type="project" value="UniProtKB-KW"/>
</dbReference>
<dbReference type="GO" id="GO:0007507">
    <property type="term" value="P:heart development"/>
    <property type="evidence" value="ECO:0007669"/>
    <property type="project" value="Ensembl"/>
</dbReference>
<dbReference type="GO" id="GO:0008285">
    <property type="term" value="P:negative regulation of cell population proliferation"/>
    <property type="evidence" value="ECO:0000250"/>
    <property type="project" value="UniProtKB"/>
</dbReference>
<dbReference type="GO" id="GO:0000122">
    <property type="term" value="P:negative regulation of transcription by RNA polymerase II"/>
    <property type="evidence" value="ECO:0000315"/>
    <property type="project" value="UniProtKB"/>
</dbReference>
<dbReference type="GO" id="GO:0018027">
    <property type="term" value="P:peptidyl-lysine dimethylation"/>
    <property type="evidence" value="ECO:0000250"/>
    <property type="project" value="UniProtKB"/>
</dbReference>
<dbReference type="GO" id="GO:0018026">
    <property type="term" value="P:peptidyl-lysine monomethylation"/>
    <property type="evidence" value="ECO:0000314"/>
    <property type="project" value="UniProtKB"/>
</dbReference>
<dbReference type="GO" id="GO:0043516">
    <property type="term" value="P:regulation of DNA damage response, signal transduction by p53 class mediator"/>
    <property type="evidence" value="ECO:0000315"/>
    <property type="project" value="UniProtKB"/>
</dbReference>
<dbReference type="GO" id="GO:1901796">
    <property type="term" value="P:regulation of signal transduction by p53 class mediator"/>
    <property type="evidence" value="ECO:0000304"/>
    <property type="project" value="Reactome"/>
</dbReference>
<dbReference type="CDD" id="cd19202">
    <property type="entry name" value="SET_SMYD2"/>
    <property type="match status" value="1"/>
</dbReference>
<dbReference type="FunFam" id="2.170.270.10:FF:000013">
    <property type="entry name" value="Histone-lysine N-methyltransferase SMYD1 isoform 1"/>
    <property type="match status" value="1"/>
</dbReference>
<dbReference type="FunFam" id="1.10.220.160:FF:000001">
    <property type="entry name" value="N-lysine methyltransferase SMYD2 isoform X1"/>
    <property type="match status" value="1"/>
</dbReference>
<dbReference type="FunFam" id="1.25.40.970:FF:000002">
    <property type="entry name" value="N-lysine methyltransferase SMYD2 isoform X1"/>
    <property type="match status" value="1"/>
</dbReference>
<dbReference type="FunFam" id="6.10.140.2220:FF:000013">
    <property type="entry name" value="N-lysine methyltransferase SMYD2 isoform X1"/>
    <property type="match status" value="1"/>
</dbReference>
<dbReference type="FunFam" id="1.25.40.10:FF:000249">
    <property type="entry name" value="N-lysine methyltransferase SMYD2 isoform X2"/>
    <property type="match status" value="1"/>
</dbReference>
<dbReference type="Gene3D" id="1.10.220.160">
    <property type="match status" value="1"/>
</dbReference>
<dbReference type="Gene3D" id="1.25.40.970">
    <property type="match status" value="1"/>
</dbReference>
<dbReference type="Gene3D" id="6.10.140.2220">
    <property type="match status" value="1"/>
</dbReference>
<dbReference type="Gene3D" id="2.170.270.10">
    <property type="entry name" value="SET domain"/>
    <property type="match status" value="1"/>
</dbReference>
<dbReference type="Gene3D" id="1.25.40.10">
    <property type="entry name" value="Tetratricopeptide repeat domain"/>
    <property type="match status" value="1"/>
</dbReference>
<dbReference type="IDEAL" id="IID00329"/>
<dbReference type="InterPro" id="IPR050869">
    <property type="entry name" value="H3K4_H4K5_MeTrfase"/>
</dbReference>
<dbReference type="InterPro" id="IPR001214">
    <property type="entry name" value="SET_dom"/>
</dbReference>
<dbReference type="InterPro" id="IPR046341">
    <property type="entry name" value="SET_dom_sf"/>
</dbReference>
<dbReference type="InterPro" id="IPR044419">
    <property type="entry name" value="SMYD2_SET"/>
</dbReference>
<dbReference type="InterPro" id="IPR011990">
    <property type="entry name" value="TPR-like_helical_dom_sf"/>
</dbReference>
<dbReference type="InterPro" id="IPR002893">
    <property type="entry name" value="Znf_MYND"/>
</dbReference>
<dbReference type="PANTHER" id="PTHR12197">
    <property type="entry name" value="HISTONE-LYSINE N-METHYLTRANSFERASE SMYD"/>
    <property type="match status" value="1"/>
</dbReference>
<dbReference type="PANTHER" id="PTHR12197:SF193">
    <property type="entry name" value="N-LYSINE METHYLTRANSFERASE SMYD2"/>
    <property type="match status" value="1"/>
</dbReference>
<dbReference type="Pfam" id="PF00856">
    <property type="entry name" value="SET"/>
    <property type="match status" value="1"/>
</dbReference>
<dbReference type="Pfam" id="PF01753">
    <property type="entry name" value="zf-MYND"/>
    <property type="match status" value="1"/>
</dbReference>
<dbReference type="SMART" id="SM00317">
    <property type="entry name" value="SET"/>
    <property type="match status" value="1"/>
</dbReference>
<dbReference type="SUPFAM" id="SSF82199">
    <property type="entry name" value="SET domain"/>
    <property type="match status" value="1"/>
</dbReference>
<dbReference type="SUPFAM" id="SSF48452">
    <property type="entry name" value="TPR-like"/>
    <property type="match status" value="1"/>
</dbReference>
<dbReference type="PROSITE" id="PS50280">
    <property type="entry name" value="SET"/>
    <property type="match status" value="1"/>
</dbReference>
<dbReference type="PROSITE" id="PS01360">
    <property type="entry name" value="ZF_MYND_1"/>
    <property type="match status" value="1"/>
</dbReference>
<dbReference type="PROSITE" id="PS50865">
    <property type="entry name" value="ZF_MYND_2"/>
    <property type="match status" value="1"/>
</dbReference>
<accession>Q9NRG4</accession>
<accession>B2R9P9</accession>
<accession>I6L9H7</accession>
<accession>Q4V765</accession>
<accession>Q5VSH9</accession>
<accession>Q96AI4</accession>
<comment type="function">
    <text evidence="6 8 9 10 12 13">Protein-lysine N-methyltransferase that methylates both histones and non-histone proteins, including p53/TP53 and RB1. Specifically trimethylates histone H3 'Lys-4' (H3K4me3) in vivo. The activity requires interaction with HSP90alpha. Shows even higher methyltransferase activity on p53/TP53. Monomethylates 'Lys-370' of p53/TP53, leading to decreased DNA-binding activity and subsequent transcriptional regulation activity of p53/TP53. Monomethylates RB1 at 'Lys-860'.</text>
</comment>
<comment type="catalytic activity">
    <reaction evidence="9 12 13">
        <text>L-lysyl(4)-[histone H3] + 3 S-adenosyl-L-methionine = N(6),N(6),N(6)-trimethyl-L-lysyl(4)-[histone H3] + 3 S-adenosyl-L-homocysteine + 3 H(+)</text>
        <dbReference type="Rhea" id="RHEA:60260"/>
        <dbReference type="Rhea" id="RHEA-COMP:15537"/>
        <dbReference type="Rhea" id="RHEA-COMP:15547"/>
        <dbReference type="ChEBI" id="CHEBI:15378"/>
        <dbReference type="ChEBI" id="CHEBI:29969"/>
        <dbReference type="ChEBI" id="CHEBI:57856"/>
        <dbReference type="ChEBI" id="CHEBI:59789"/>
        <dbReference type="ChEBI" id="CHEBI:61961"/>
        <dbReference type="EC" id="2.1.1.354"/>
    </reaction>
</comment>
<comment type="catalytic activity">
    <reaction evidence="9 12 13">
        <text>L-lysyl-[protein] + S-adenosyl-L-methionine = N(6)-methyl-L-lysyl-[protein] + S-adenosyl-L-homocysteine + H(+)</text>
        <dbReference type="Rhea" id="RHEA:51736"/>
        <dbReference type="Rhea" id="RHEA-COMP:9752"/>
        <dbReference type="Rhea" id="RHEA-COMP:13053"/>
        <dbReference type="ChEBI" id="CHEBI:15378"/>
        <dbReference type="ChEBI" id="CHEBI:29969"/>
        <dbReference type="ChEBI" id="CHEBI:57856"/>
        <dbReference type="ChEBI" id="CHEBI:59789"/>
        <dbReference type="ChEBI" id="CHEBI:61929"/>
    </reaction>
</comment>
<comment type="subunit">
    <text evidence="1 6 9 10 11">Interacts with RNA polymerase II and HELZ. Interacts with SIN3A and HDAC1 (By similarity). Interacts (via MYND-type zinc finger) with EPB41L3. Interacts (via SET domain) with p53/TP53. Interacts with RB1 and HSP90AA1.</text>
</comment>
<comment type="interaction">
    <interactant intactId="EBI-1055671">
        <id>Q9NRG4</id>
    </interactant>
    <interactant intactId="EBI-1054703">
        <id>P20290-2</id>
        <label>BTF3</label>
    </interactant>
    <organismsDiffer>false</organismsDiffer>
    <experiments>3</experiments>
</comment>
<comment type="interaction">
    <interactant intactId="EBI-1055671">
        <id>Q9NRG4</id>
    </interactant>
    <interactant intactId="EBI-6137496">
        <id>Q96K17</id>
        <label>BTF3L4</label>
    </interactant>
    <organismsDiffer>false</organismsDiffer>
    <experiments>3</experiments>
</comment>
<comment type="interaction">
    <interactant intactId="EBI-1055671">
        <id>Q9NRG4</id>
    </interactant>
    <interactant intactId="EBI-6381479">
        <id>Q9UPZ9</id>
        <label>CILK1</label>
    </interactant>
    <organismsDiffer>false</organismsDiffer>
    <experiments>2</experiments>
</comment>
<comment type="interaction">
    <interactant intactId="EBI-1055671">
        <id>Q9NRG4</id>
    </interactant>
    <interactant intactId="EBI-10329449">
        <id>Q9Y5W9</id>
        <label>SNX11</label>
    </interactant>
    <organismsDiffer>false</organismsDiffer>
    <experiments>3</experiments>
</comment>
<comment type="interaction">
    <interactant intactId="EBI-1055671">
        <id>Q9NRG4</id>
    </interactant>
    <interactant intactId="EBI-366083">
        <id>P04637</id>
        <label>TP53</label>
    </interactant>
    <organismsDiffer>false</organismsDiffer>
    <experiments>6</experiments>
</comment>
<comment type="subcellular location">
    <subcellularLocation>
        <location evidence="1">Cytoplasm</location>
        <location evidence="1">Cytosol</location>
    </subcellularLocation>
    <subcellularLocation>
        <location evidence="1">Nucleus</location>
    </subcellularLocation>
</comment>
<comment type="alternative products">
    <event type="alternative splicing"/>
    <isoform>
        <id>Q9NRG4-1</id>
        <name>1</name>
        <sequence type="displayed"/>
    </isoform>
    <isoform>
        <id>Q9NRG4-2</id>
        <name>2</name>
        <sequence type="described" ref="VSP_056005"/>
    </isoform>
</comment>
<comment type="induction">
    <text evidence="7">Expression is repressed by CEBPA.</text>
</comment>
<comment type="similarity">
    <text evidence="3">Belongs to the class V-like SAM-binding methyltransferase superfamily.</text>
</comment>
<comment type="online information" name="Atlas of Genetics and Cytogenetics in Oncology and Haematology">
    <link uri="https://atlasgeneticsoncology.org/gene/47098/SMYD2"/>
</comment>
<name>SMYD2_HUMAN</name>
<gene>
    <name type="primary">SMYD2</name>
    <name type="synonym">KMT3C</name>
</gene>
<feature type="chain" id="PRO_0000218309" description="N-lysine methyltransferase SMYD2">
    <location>
        <begin position="1"/>
        <end position="433"/>
    </location>
</feature>
<feature type="domain" description="SET" evidence="3">
    <location>
        <begin position="7"/>
        <end position="241"/>
    </location>
</feature>
<feature type="zinc finger region" description="MYND-type" evidence="2">
    <location>
        <begin position="52"/>
        <end position="90"/>
    </location>
</feature>
<feature type="binding site">
    <location>
        <begin position="17"/>
        <end position="19"/>
    </location>
    <ligand>
        <name>S-adenosyl-L-methionine</name>
        <dbReference type="ChEBI" id="CHEBI:59789"/>
    </ligand>
</feature>
<feature type="binding site" evidence="2">
    <location>
        <position position="52"/>
    </location>
    <ligand>
        <name>Zn(2+)</name>
        <dbReference type="ChEBI" id="CHEBI:29105"/>
        <label>1</label>
    </ligand>
</feature>
<feature type="binding site" evidence="2">
    <location>
        <position position="55"/>
    </location>
    <ligand>
        <name>Zn(2+)</name>
        <dbReference type="ChEBI" id="CHEBI:29105"/>
        <label>1</label>
    </ligand>
</feature>
<feature type="binding site" evidence="2">
    <location>
        <position position="65"/>
    </location>
    <ligand>
        <name>Zn(2+)</name>
        <dbReference type="ChEBI" id="CHEBI:29105"/>
        <label>2</label>
    </ligand>
</feature>
<feature type="binding site" evidence="2">
    <location>
        <position position="68"/>
    </location>
    <ligand>
        <name>Zn(2+)</name>
        <dbReference type="ChEBI" id="CHEBI:29105"/>
        <label>2</label>
    </ligand>
</feature>
<feature type="binding site" evidence="2">
    <location>
        <position position="74"/>
    </location>
    <ligand>
        <name>Zn(2+)</name>
        <dbReference type="ChEBI" id="CHEBI:29105"/>
        <label>1</label>
    </ligand>
</feature>
<feature type="binding site" evidence="2">
    <location>
        <position position="78"/>
    </location>
    <ligand>
        <name>Zn(2+)</name>
        <dbReference type="ChEBI" id="CHEBI:29105"/>
        <label>1</label>
    </ligand>
</feature>
<feature type="binding site" evidence="2">
    <location>
        <position position="86"/>
    </location>
    <ligand>
        <name>Zn(2+)</name>
        <dbReference type="ChEBI" id="CHEBI:29105"/>
        <label>2</label>
    </ligand>
</feature>
<feature type="binding site" evidence="2">
    <location>
        <position position="90"/>
    </location>
    <ligand>
        <name>Zn(2+)</name>
        <dbReference type="ChEBI" id="CHEBI:29105"/>
        <label>2</label>
    </ligand>
</feature>
<feature type="binding site" evidence="3 11">
    <location>
        <position position="137"/>
    </location>
    <ligand>
        <name>S-adenosyl-L-methionine</name>
        <dbReference type="ChEBI" id="CHEBI:59789"/>
    </ligand>
</feature>
<feature type="binding site">
    <location>
        <begin position="206"/>
        <end position="207"/>
    </location>
    <ligand>
        <name>S-adenosyl-L-methionine</name>
        <dbReference type="ChEBI" id="CHEBI:59789"/>
    </ligand>
</feature>
<feature type="binding site">
    <location>
        <begin position="258"/>
        <end position="260"/>
    </location>
    <ligand>
        <name>S-adenosyl-L-methionine</name>
        <dbReference type="ChEBI" id="CHEBI:59789"/>
    </ligand>
</feature>
<feature type="modified residue" description="Phosphoserine" evidence="16">
    <location>
        <position position="283"/>
    </location>
</feature>
<feature type="splice variant" id="VSP_056005" description="In isoform 2." evidence="15">
    <location>
        <begin position="273"/>
        <end position="433"/>
    </location>
</feature>
<feature type="sequence variant" id="VAR_023442" description="In dbSNP:rs1134647." evidence="4 5 14">
    <original>G</original>
    <variation>E</variation>
    <location>
        <position position="165"/>
    </location>
</feature>
<feature type="sequence variant" id="VAR_052991" description="In dbSNP:rs11120301.">
    <original>I</original>
    <variation>M</variation>
    <location>
        <position position="430"/>
    </location>
</feature>
<feature type="mutagenesis site" description="Abolishes methyltransferase activity on p53/TP53." evidence="13">
    <original>E</original>
    <variation>K</variation>
    <location>
        <position position="187"/>
    </location>
</feature>
<feature type="mutagenesis site" description="Strongly reduces methyltransferase activity on p53/TP53." evidence="13">
    <original>E</original>
    <variation>K</variation>
    <location>
        <position position="189"/>
    </location>
</feature>
<feature type="mutagenesis site" description="Strongly reduces methyltransferase activity on p53/TP53." evidence="13">
    <original>E</original>
    <variation>K</variation>
    <location>
        <position position="190"/>
    </location>
</feature>
<feature type="mutagenesis site" description="Abolishes methyltransferase activity." evidence="6">
    <original>H</original>
    <variation>A</variation>
    <location>
        <position position="207"/>
    </location>
</feature>
<feature type="mutagenesis site" description="Abolishes methyltransferase activity." evidence="10 12">
    <original>Y</original>
    <variation>F</variation>
    <location>
        <position position="240"/>
    </location>
</feature>
<feature type="mutagenesis site" description="Strongly reduces methyltransferase activity on p53/TP53." evidence="13">
    <original>Y</original>
    <variation>F</variation>
    <location>
        <position position="245"/>
    </location>
</feature>
<feature type="mutagenesis site" description="Slightly reduces methyltransferase activity on p53/TP53." evidence="13">
    <original>D</original>
    <variation>R</variation>
    <location>
        <position position="252"/>
    </location>
</feature>
<feature type="mutagenesis site" description="No effect on methyltransferase activity on p53/TP53." evidence="13">
    <original>R</original>
    <variation>Q</variation>
    <location>
        <position position="253"/>
    </location>
</feature>
<feature type="mutagenesis site" description="No effect on methyltransferase activity on p53/TP53." evidence="13">
    <original>R</original>
    <variation>E</variation>
    <location>
        <position position="306"/>
    </location>
</feature>
<feature type="mutagenesis site" description="Abolishes methyltransferase activity on p53/TP53." evidence="13">
    <original>Y</original>
    <variation>A</variation>
    <location>
        <position position="374"/>
    </location>
</feature>
<feature type="mutagenesis site" description="Reduces methyltransferase activity on p53/TP53." evidence="13">
    <original>E</original>
    <variation>K</variation>
    <location>
        <position position="429"/>
    </location>
</feature>
<feature type="mutagenesis site" description="Strongly reduces methyltransferase activity on p53/TP53." evidence="13">
    <original>E</original>
    <variation>K</variation>
    <location>
        <position position="431"/>
    </location>
</feature>
<feature type="helix" evidence="20">
    <location>
        <begin position="1"/>
        <end position="4"/>
    </location>
</feature>
<feature type="turn" evidence="20">
    <location>
        <begin position="5"/>
        <end position="8"/>
    </location>
</feature>
<feature type="strand" evidence="17">
    <location>
        <begin position="9"/>
        <end position="14"/>
    </location>
</feature>
<feature type="turn" evidence="17">
    <location>
        <begin position="15"/>
        <end position="17"/>
    </location>
</feature>
<feature type="strand" evidence="17">
    <location>
        <begin position="18"/>
        <end position="25"/>
    </location>
</feature>
<feature type="strand" evidence="17">
    <location>
        <begin position="32"/>
        <end position="37"/>
    </location>
</feature>
<feature type="strand" evidence="17">
    <location>
        <begin position="39"/>
        <end position="43"/>
    </location>
</feature>
<feature type="helix" evidence="17">
    <location>
        <begin position="45"/>
        <end position="47"/>
    </location>
</feature>
<feature type="turn" evidence="21">
    <location>
        <begin position="48"/>
        <end position="50"/>
    </location>
</feature>
<feature type="turn" evidence="17">
    <location>
        <begin position="53"/>
        <end position="55"/>
    </location>
</feature>
<feature type="turn" evidence="17">
    <location>
        <begin position="66"/>
        <end position="68"/>
    </location>
</feature>
<feature type="strand" evidence="17">
    <location>
        <begin position="72"/>
        <end position="75"/>
    </location>
</feature>
<feature type="helix" evidence="17">
    <location>
        <begin position="76"/>
        <end position="86"/>
    </location>
</feature>
<feature type="turn" evidence="17">
    <location>
        <begin position="87"/>
        <end position="89"/>
    </location>
</feature>
<feature type="helix" evidence="17">
    <location>
        <begin position="90"/>
        <end position="96"/>
    </location>
</feature>
<feature type="helix" evidence="17">
    <location>
        <begin position="97"/>
        <end position="99"/>
    </location>
</feature>
<feature type="helix" evidence="17">
    <location>
        <begin position="104"/>
        <end position="118"/>
    </location>
</feature>
<feature type="helix" evidence="21">
    <location>
        <begin position="124"/>
        <end position="126"/>
    </location>
</feature>
<feature type="strand" evidence="23">
    <location>
        <begin position="127"/>
        <end position="129"/>
    </location>
</feature>
<feature type="helix" evidence="17">
    <location>
        <begin position="131"/>
        <end position="133"/>
    </location>
</feature>
<feature type="helix" evidence="17">
    <location>
        <begin position="138"/>
        <end position="140"/>
    </location>
</feature>
<feature type="helix" evidence="17">
    <location>
        <begin position="143"/>
        <end position="164"/>
    </location>
</feature>
<feature type="helix" evidence="17">
    <location>
        <begin position="169"/>
        <end position="182"/>
    </location>
</feature>
<feature type="strand" evidence="17">
    <location>
        <begin position="184"/>
        <end position="187"/>
    </location>
</feature>
<feature type="strand" evidence="17">
    <location>
        <begin position="193"/>
        <end position="198"/>
    </location>
</feature>
<feature type="helix" evidence="17">
    <location>
        <begin position="200"/>
        <end position="203"/>
    </location>
</feature>
<feature type="strand" evidence="18">
    <location>
        <begin position="205"/>
        <end position="207"/>
    </location>
</feature>
<feature type="strand" evidence="17">
    <location>
        <begin position="212"/>
        <end position="218"/>
    </location>
</feature>
<feature type="strand" evidence="17">
    <location>
        <begin position="221"/>
        <end position="228"/>
    </location>
</feature>
<feature type="strand" evidence="22">
    <location>
        <begin position="235"/>
        <end position="238"/>
    </location>
</feature>
<feature type="strand" evidence="19">
    <location>
        <begin position="243"/>
        <end position="245"/>
    </location>
</feature>
<feature type="helix" evidence="17">
    <location>
        <begin position="247"/>
        <end position="258"/>
    </location>
</feature>
<feature type="helix" evidence="17">
    <location>
        <begin position="265"/>
        <end position="269"/>
    </location>
</feature>
<feature type="helix" evidence="17">
    <location>
        <begin position="273"/>
        <end position="276"/>
    </location>
</feature>
<feature type="helix" evidence="17">
    <location>
        <begin position="288"/>
        <end position="305"/>
    </location>
</feature>
<feature type="turn" evidence="18">
    <location>
        <begin position="309"/>
        <end position="311"/>
    </location>
</feature>
<feature type="helix" evidence="17">
    <location>
        <begin position="318"/>
        <end position="329"/>
    </location>
</feature>
<feature type="helix" evidence="17">
    <location>
        <begin position="337"/>
        <end position="353"/>
    </location>
</feature>
<feature type="helix" evidence="17">
    <location>
        <begin position="356"/>
        <end position="373"/>
    </location>
</feature>
<feature type="helix" evidence="17">
    <location>
        <begin position="379"/>
        <end position="394"/>
    </location>
</feature>
<feature type="helix" evidence="17">
    <location>
        <begin position="398"/>
        <end position="415"/>
    </location>
</feature>
<feature type="turn" evidence="19">
    <location>
        <begin position="416"/>
        <end position="419"/>
    </location>
</feature>
<feature type="helix" evidence="17">
    <location>
        <begin position="421"/>
        <end position="432"/>
    </location>
</feature>
<organism>
    <name type="scientific">Homo sapiens</name>
    <name type="common">Human</name>
    <dbReference type="NCBI Taxonomy" id="9606"/>
    <lineage>
        <taxon>Eukaryota</taxon>
        <taxon>Metazoa</taxon>
        <taxon>Chordata</taxon>
        <taxon>Craniata</taxon>
        <taxon>Vertebrata</taxon>
        <taxon>Euteleostomi</taxon>
        <taxon>Mammalia</taxon>
        <taxon>Eutheria</taxon>
        <taxon>Euarchontoglires</taxon>
        <taxon>Primates</taxon>
        <taxon>Haplorrhini</taxon>
        <taxon>Catarrhini</taxon>
        <taxon>Hominidae</taxon>
        <taxon>Homo</taxon>
    </lineage>
</organism>